<dbReference type="EC" id="1.2.1.11" evidence="2 4"/>
<dbReference type="EMBL" id="L42023">
    <property type="protein sequence ID" value="AAC22306.1"/>
    <property type="molecule type" value="Genomic_DNA"/>
</dbReference>
<dbReference type="PIR" id="B64084">
    <property type="entry name" value="B64084"/>
</dbReference>
<dbReference type="RefSeq" id="NP_438806.1">
    <property type="nucleotide sequence ID" value="NC_000907.1"/>
</dbReference>
<dbReference type="PDB" id="1NWC">
    <property type="method" value="X-ray"/>
    <property type="resolution" value="2.04 A"/>
    <property type="chains" value="A/B=1-371"/>
</dbReference>
<dbReference type="PDB" id="1NWH">
    <property type="method" value="X-ray"/>
    <property type="resolution" value="2.00 A"/>
    <property type="chains" value="A/B=1-371"/>
</dbReference>
<dbReference type="PDB" id="1NX6">
    <property type="method" value="X-ray"/>
    <property type="resolution" value="2.15 A"/>
    <property type="chains" value="A=1-371"/>
</dbReference>
<dbReference type="PDB" id="1OZA">
    <property type="method" value="X-ray"/>
    <property type="resolution" value="2.06 A"/>
    <property type="chains" value="A=1-371"/>
</dbReference>
<dbReference type="PDB" id="1PQP">
    <property type="method" value="X-ray"/>
    <property type="resolution" value="2.06 A"/>
    <property type="chains" value="A=1-371"/>
</dbReference>
<dbReference type="PDB" id="1PQU">
    <property type="method" value="X-ray"/>
    <property type="resolution" value="1.92 A"/>
    <property type="chains" value="A/B/C/D=1-371"/>
</dbReference>
<dbReference type="PDB" id="1PR3">
    <property type="method" value="X-ray"/>
    <property type="resolution" value="2.15 A"/>
    <property type="chains" value="A=1-371"/>
</dbReference>
<dbReference type="PDB" id="1PS8">
    <property type="method" value="X-ray"/>
    <property type="resolution" value="2.40 A"/>
    <property type="chains" value="A=1-371"/>
</dbReference>
<dbReference type="PDB" id="1PU2">
    <property type="method" value="X-ray"/>
    <property type="resolution" value="2.06 A"/>
    <property type="chains" value="A=1-371"/>
</dbReference>
<dbReference type="PDB" id="1Q2X">
    <property type="method" value="X-ray"/>
    <property type="resolution" value="2.05 A"/>
    <property type="chains" value="A/B=1-371"/>
</dbReference>
<dbReference type="PDB" id="1TA4">
    <property type="method" value="X-ray"/>
    <property type="resolution" value="2.28 A"/>
    <property type="chains" value="A=1-371"/>
</dbReference>
<dbReference type="PDB" id="1TB4">
    <property type="method" value="X-ray"/>
    <property type="resolution" value="2.15 A"/>
    <property type="chains" value="A=1-371"/>
</dbReference>
<dbReference type="PDBsum" id="1NWC"/>
<dbReference type="PDBsum" id="1NWH"/>
<dbReference type="PDBsum" id="1NX6"/>
<dbReference type="PDBsum" id="1OZA"/>
<dbReference type="PDBsum" id="1PQP"/>
<dbReference type="PDBsum" id="1PQU"/>
<dbReference type="PDBsum" id="1PR3"/>
<dbReference type="PDBsum" id="1PS8"/>
<dbReference type="PDBsum" id="1PU2"/>
<dbReference type="PDBsum" id="1Q2X"/>
<dbReference type="PDBsum" id="1TA4"/>
<dbReference type="PDBsum" id="1TB4"/>
<dbReference type="SMR" id="P44801"/>
<dbReference type="STRING" id="71421.HI_0646"/>
<dbReference type="DrugBank" id="DB03502">
    <property type="generic name" value="(4s)-4-{[(2s)-2-Amino-3-Oxopropyl]Sulfanyl}-L-Homoserinate"/>
</dbReference>
<dbReference type="DrugBank" id="DB04498">
    <property type="generic name" value="Aspartate Semialdehyde"/>
</dbReference>
<dbReference type="DrugBank" id="DB03461">
    <property type="generic name" value="Nicotinamide adenine dinucleotide phosphate"/>
</dbReference>
<dbReference type="EnsemblBacteria" id="AAC22306">
    <property type="protein sequence ID" value="AAC22306"/>
    <property type="gene ID" value="HI_0646"/>
</dbReference>
<dbReference type="KEGG" id="hin:HI_0646"/>
<dbReference type="PATRIC" id="fig|71421.8.peg.675"/>
<dbReference type="eggNOG" id="COG0136">
    <property type="taxonomic scope" value="Bacteria"/>
</dbReference>
<dbReference type="HOGENOM" id="CLU_066397_0_0_6"/>
<dbReference type="OrthoDB" id="9022717at2"/>
<dbReference type="PhylomeDB" id="P44801"/>
<dbReference type="BioCyc" id="HINF71421:G1GJ1-681-MONOMER"/>
<dbReference type="BRENDA" id="1.2.1.11">
    <property type="organism ID" value="2529"/>
</dbReference>
<dbReference type="SABIO-RK" id="P44801"/>
<dbReference type="UniPathway" id="UPA00034">
    <property type="reaction ID" value="UER00016"/>
</dbReference>
<dbReference type="UniPathway" id="UPA00050">
    <property type="reaction ID" value="UER00463"/>
</dbReference>
<dbReference type="UniPathway" id="UPA00051">
    <property type="reaction ID" value="UER00464"/>
</dbReference>
<dbReference type="EvolutionaryTrace" id="P44801"/>
<dbReference type="Proteomes" id="UP000000579">
    <property type="component" value="Chromosome"/>
</dbReference>
<dbReference type="GO" id="GO:0004073">
    <property type="term" value="F:aspartate-semialdehyde dehydrogenase activity"/>
    <property type="evidence" value="ECO:0007669"/>
    <property type="project" value="UniProtKB-UniRule"/>
</dbReference>
<dbReference type="GO" id="GO:0051287">
    <property type="term" value="F:NAD binding"/>
    <property type="evidence" value="ECO:0007669"/>
    <property type="project" value="InterPro"/>
</dbReference>
<dbReference type="GO" id="GO:0050661">
    <property type="term" value="F:NADP binding"/>
    <property type="evidence" value="ECO:0007669"/>
    <property type="project" value="UniProtKB-UniRule"/>
</dbReference>
<dbReference type="GO" id="GO:0046983">
    <property type="term" value="F:protein dimerization activity"/>
    <property type="evidence" value="ECO:0007669"/>
    <property type="project" value="InterPro"/>
</dbReference>
<dbReference type="GO" id="GO:0071266">
    <property type="term" value="P:'de novo' L-methionine biosynthetic process"/>
    <property type="evidence" value="ECO:0007669"/>
    <property type="project" value="UniProtKB-UniRule"/>
</dbReference>
<dbReference type="GO" id="GO:0019877">
    <property type="term" value="P:diaminopimelate biosynthetic process"/>
    <property type="evidence" value="ECO:0007669"/>
    <property type="project" value="UniProtKB-UniRule"/>
</dbReference>
<dbReference type="GO" id="GO:0009097">
    <property type="term" value="P:isoleucine biosynthetic process"/>
    <property type="evidence" value="ECO:0007669"/>
    <property type="project" value="InterPro"/>
</dbReference>
<dbReference type="GO" id="GO:0009089">
    <property type="term" value="P:lysine biosynthetic process via diaminopimelate"/>
    <property type="evidence" value="ECO:0007669"/>
    <property type="project" value="UniProtKB-UniRule"/>
</dbReference>
<dbReference type="GO" id="GO:0009088">
    <property type="term" value="P:threonine biosynthetic process"/>
    <property type="evidence" value="ECO:0007669"/>
    <property type="project" value="UniProtKB-UniRule"/>
</dbReference>
<dbReference type="CDD" id="cd23938">
    <property type="entry name" value="ASADH_C_bac_like"/>
    <property type="match status" value="1"/>
</dbReference>
<dbReference type="CDD" id="cd02314">
    <property type="entry name" value="VcASADH1_like_N"/>
    <property type="match status" value="1"/>
</dbReference>
<dbReference type="Gene3D" id="3.30.360.10">
    <property type="entry name" value="Dihydrodipicolinate Reductase, domain 2"/>
    <property type="match status" value="1"/>
</dbReference>
<dbReference type="Gene3D" id="3.40.50.720">
    <property type="entry name" value="NAD(P)-binding Rossmann-like Domain"/>
    <property type="match status" value="1"/>
</dbReference>
<dbReference type="HAMAP" id="MF_02121">
    <property type="entry name" value="ASADH"/>
    <property type="match status" value="1"/>
</dbReference>
<dbReference type="InterPro" id="IPR000319">
    <property type="entry name" value="Asp-semialdehyde_DH_CS"/>
</dbReference>
<dbReference type="InterPro" id="IPR011534">
    <property type="entry name" value="Asp_ADH_gamma-type"/>
</dbReference>
<dbReference type="InterPro" id="IPR012080">
    <property type="entry name" value="Asp_semialdehyde_DH"/>
</dbReference>
<dbReference type="InterPro" id="IPR036291">
    <property type="entry name" value="NAD(P)-bd_dom_sf"/>
</dbReference>
<dbReference type="InterPro" id="IPR000534">
    <property type="entry name" value="Semialdehyde_DH_NAD-bd"/>
</dbReference>
<dbReference type="InterPro" id="IPR012280">
    <property type="entry name" value="Semialdhyde_DH_dimer_dom"/>
</dbReference>
<dbReference type="NCBIfam" id="TIGR01745">
    <property type="entry name" value="asd_gamma"/>
    <property type="match status" value="1"/>
</dbReference>
<dbReference type="NCBIfam" id="NF005144">
    <property type="entry name" value="PRK06598.1"/>
    <property type="match status" value="1"/>
</dbReference>
<dbReference type="PANTHER" id="PTHR46278:SF4">
    <property type="entry name" value="ASPARTATE-SEMIALDEHYDE DEHYDROGENASE"/>
    <property type="match status" value="1"/>
</dbReference>
<dbReference type="PANTHER" id="PTHR46278">
    <property type="entry name" value="DEHYDROGENASE, PUTATIVE-RELATED"/>
    <property type="match status" value="1"/>
</dbReference>
<dbReference type="Pfam" id="PF01118">
    <property type="entry name" value="Semialdhyde_dh"/>
    <property type="match status" value="1"/>
</dbReference>
<dbReference type="Pfam" id="PF02774">
    <property type="entry name" value="Semialdhyde_dhC"/>
    <property type="match status" value="1"/>
</dbReference>
<dbReference type="PIRSF" id="PIRSF000148">
    <property type="entry name" value="ASA_dh"/>
    <property type="match status" value="1"/>
</dbReference>
<dbReference type="SMART" id="SM00859">
    <property type="entry name" value="Semialdhyde_dh"/>
    <property type="match status" value="1"/>
</dbReference>
<dbReference type="SUPFAM" id="SSF55347">
    <property type="entry name" value="Glyceraldehyde-3-phosphate dehydrogenase-like, C-terminal domain"/>
    <property type="match status" value="1"/>
</dbReference>
<dbReference type="SUPFAM" id="SSF51735">
    <property type="entry name" value="NAD(P)-binding Rossmann-fold domains"/>
    <property type="match status" value="1"/>
</dbReference>
<dbReference type="PROSITE" id="PS01103">
    <property type="entry name" value="ASD"/>
    <property type="match status" value="1"/>
</dbReference>
<proteinExistence type="evidence at protein level"/>
<reference key="1">
    <citation type="journal article" date="1995" name="Science">
        <title>Whole-genome random sequencing and assembly of Haemophilus influenzae Rd.</title>
        <authorList>
            <person name="Fleischmann R.D."/>
            <person name="Adams M.D."/>
            <person name="White O."/>
            <person name="Clayton R.A."/>
            <person name="Kirkness E.F."/>
            <person name="Kerlavage A.R."/>
            <person name="Bult C.J."/>
            <person name="Tomb J.-F."/>
            <person name="Dougherty B.A."/>
            <person name="Merrick J.M."/>
            <person name="McKenney K."/>
            <person name="Sutton G.G."/>
            <person name="FitzHugh W."/>
            <person name="Fields C.A."/>
            <person name="Gocayne J.D."/>
            <person name="Scott J.D."/>
            <person name="Shirley R."/>
            <person name="Liu L.-I."/>
            <person name="Glodek A."/>
            <person name="Kelley J.M."/>
            <person name="Weidman J.F."/>
            <person name="Phillips C.A."/>
            <person name="Spriggs T."/>
            <person name="Hedblom E."/>
            <person name="Cotton M.D."/>
            <person name="Utterback T.R."/>
            <person name="Hanna M.C."/>
            <person name="Nguyen D.T."/>
            <person name="Saudek D.M."/>
            <person name="Brandon R.C."/>
            <person name="Fine L.D."/>
            <person name="Fritchman J.L."/>
            <person name="Fuhrmann J.L."/>
            <person name="Geoghagen N.S.M."/>
            <person name="Gnehm C.L."/>
            <person name="McDonald L.A."/>
            <person name="Small K.V."/>
            <person name="Fraser C.M."/>
            <person name="Smith H.O."/>
            <person name="Venter J.C."/>
        </authorList>
    </citation>
    <scope>NUCLEOTIDE SEQUENCE [LARGE SCALE GENOMIC DNA]</scope>
    <source>
        <strain>ATCC 51907 / DSM 11121 / KW20 / Rd</strain>
    </source>
</reference>
<reference key="2">
    <citation type="journal article" date="2002" name="Protein Expr. Purif.">
        <title>Expression and purification of aspartate beta-semialdehyde dehydrogenase from infectious microorganisms.</title>
        <authorList>
            <person name="Moore R.A."/>
            <person name="Bocik W.E."/>
            <person name="Viola R.E."/>
        </authorList>
    </citation>
    <scope>FUNCTION</scope>
    <scope>CATALYTIC ACTIVITY</scope>
    <scope>KINETIC PARAMETERS</scope>
    <source>
        <strain>ATCC 51907 / DSM 11121 / KW20 / Rd</strain>
    </source>
</reference>
<reference key="3">
    <citation type="journal article" date="2003" name="Proc. Natl. Acad. Sci. U.S.A.">
        <title>Capture of an intermediate in the catalytic cycle of L-aspartate-beta-semialdehyde dehydrogenase.</title>
        <authorList>
            <person name="Blanco J."/>
            <person name="Moore R.A."/>
            <person name="Viola R.E."/>
        </authorList>
    </citation>
    <scope>X-RAY CRYSTALLOGRAPHY (2.0 ANGSTROMS) OF APOENZYME AND IN COMPLEX WITH L-ASPARTATE-SEMIALDEHYDE AND PHOSPHATE</scope>
    <scope>SUBUNIT</scope>
    <scope>DOMAIN</scope>
    <scope>CATALYTIC MECHANISM</scope>
    <source>
        <strain>ATCC 51907 / DSM 11121 / KW20 / Rd</strain>
    </source>
</reference>
<reference key="4">
    <citation type="journal article" date="2004" name="Acta Crystallogr. D">
        <title>The role of substrate-binding groups in the mechanism of aspartate-beta-semialdehyde dehydrogenase.</title>
        <authorList>
            <person name="Blanco J."/>
            <person name="Moore R.A."/>
            <person name="Faehnle C.R."/>
            <person name="Coe D.M."/>
            <person name="Viola R.E."/>
        </authorList>
    </citation>
    <scope>X-RAY CRYSTALLOGRAPHY (1.92 ANGSTROMS) OF MUTANTS LEU-103; LYS-103; SER-136; ASP-243; ARG-246; LYS-270 AND ASN-277 IN COMPLEX WITH NADP</scope>
    <scope>CATALYTIC ACTIVITY</scope>
    <scope>KINETIC STUDIES</scope>
    <scope>MUTAGENESIS OF ARG-103; GLU-243; LYS-246 AND ARG-270</scope>
    <source>
        <strain>ATCC 51907 / DSM 11121 / KW20 / Rd</strain>
    </source>
</reference>
<reference key="5">
    <citation type="journal article" date="2004" name="Acta Crystallogr. D">
        <title>Structural basis for discrimination between oxyanion substrates or inhibitors in aspartate-beta-semialdehyde dehydrogenase.</title>
        <authorList>
            <person name="Faehnle C.R."/>
            <person name="Blanco J."/>
            <person name="Viola R.E."/>
        </authorList>
    </citation>
    <scope>X-RAY CRYSTALLOGRAPHY (2.15 ANGSTROMS) IN COMPLEXES WITH ARSENATE AND PERIODATE IONS</scope>
    <source>
        <strain>ATCC 51907 / DSM 11121 / KW20 / Rd</strain>
    </source>
</reference>
<sequence length="371" mass="40539">MKNVGFIGWRGMVGSVLMDRMSQENDFENLNPVFFTTSQAGQKAPVFGGKDAGDLKSAFDIEELKKLDIIVTCQGGDYTNEVYPKLKATGWDGYWVDAASALRMKDDAIIVLDPVNQHVISEGLKKGIKTFVGGNCTVSLMLMAIGGLFEKDLVEWISVATYQAASGAGAKNMRELLSQMGLLEQAVSSELKDPASSILDIERKVTAKMRADNFPTDNFGAALGGSLIPWIDKLLPETGQTKEEWKGYAETNKILGLSDNPIPVDGLCVRIGALRCHSQAFTIKLKKDLPLEEIEQIIASHNEWVKVIPNDKEITLRELTPAKVTGTLSVPVGRLRKLAMGPEYLAAFTVGDQLLWGAAEPVRRILKQLVA</sequence>
<accession>P44801</accession>
<gene>
    <name evidence="1" type="primary">asd</name>
    <name type="ordered locus">HI_0646</name>
</gene>
<organism>
    <name type="scientific">Haemophilus influenzae (strain ATCC 51907 / DSM 11121 / KW20 / Rd)</name>
    <dbReference type="NCBI Taxonomy" id="71421"/>
    <lineage>
        <taxon>Bacteria</taxon>
        <taxon>Pseudomonadati</taxon>
        <taxon>Pseudomonadota</taxon>
        <taxon>Gammaproteobacteria</taxon>
        <taxon>Pasteurellales</taxon>
        <taxon>Pasteurellaceae</taxon>
        <taxon>Haemophilus</taxon>
    </lineage>
</organism>
<keyword id="KW-0002">3D-structure</keyword>
<keyword id="KW-0028">Amino-acid biosynthesis</keyword>
<keyword id="KW-0220">Diaminopimelate biosynthesis</keyword>
<keyword id="KW-0457">Lysine biosynthesis</keyword>
<keyword id="KW-0486">Methionine biosynthesis</keyword>
<keyword id="KW-0521">NADP</keyword>
<keyword id="KW-0560">Oxidoreductase</keyword>
<keyword id="KW-1185">Reference proteome</keyword>
<keyword id="KW-0791">Threonine biosynthesis</keyword>
<feature type="chain" id="PRO_0000141375" description="Aspartate-semialdehyde dehydrogenase">
    <location>
        <begin position="1"/>
        <end position="371"/>
    </location>
</feature>
<feature type="active site" description="Acyl-thioester intermediate" evidence="3 4">
    <location>
        <position position="136"/>
    </location>
</feature>
<feature type="active site" description="Proton acceptor" evidence="3">
    <location>
        <position position="277"/>
    </location>
</feature>
<feature type="binding site" evidence="4">
    <location>
        <begin position="10"/>
        <end position="13"/>
    </location>
    <ligand>
        <name>NADP(+)</name>
        <dbReference type="ChEBI" id="CHEBI:58349"/>
    </ligand>
</feature>
<feature type="binding site" evidence="4">
    <location>
        <begin position="37"/>
        <end position="38"/>
    </location>
    <ligand>
        <name>NADP(+)</name>
        <dbReference type="ChEBI" id="CHEBI:58349"/>
    </ligand>
</feature>
<feature type="binding site" evidence="4">
    <location>
        <position position="74"/>
    </location>
    <ligand>
        <name>NADP(+)</name>
        <dbReference type="ChEBI" id="CHEBI:58349"/>
    </ligand>
</feature>
<feature type="binding site" evidence="3">
    <location>
        <position position="103"/>
    </location>
    <ligand>
        <name>phosphate</name>
        <dbReference type="ChEBI" id="CHEBI:43474"/>
    </ligand>
</feature>
<feature type="binding site" evidence="5">
    <location>
        <position position="163"/>
    </location>
    <ligand>
        <name>substrate</name>
    </ligand>
</feature>
<feature type="binding site" evidence="4">
    <location>
        <position position="166"/>
    </location>
    <ligand>
        <name>NADP(+)</name>
        <dbReference type="ChEBI" id="CHEBI:58349"/>
    </ligand>
</feature>
<feature type="binding site" evidence="5">
    <location>
        <position position="243"/>
    </location>
    <ligand>
        <name>substrate</name>
    </ligand>
</feature>
<feature type="binding site" evidence="3">
    <location>
        <position position="246"/>
    </location>
    <ligand>
        <name>phosphate</name>
        <dbReference type="ChEBI" id="CHEBI:43474"/>
    </ligand>
</feature>
<feature type="binding site" evidence="5">
    <location>
        <position position="270"/>
    </location>
    <ligand>
        <name>substrate</name>
    </ligand>
</feature>
<feature type="binding site" evidence="4">
    <location>
        <position position="353"/>
    </location>
    <ligand>
        <name>NADP(+)</name>
        <dbReference type="ChEBI" id="CHEBI:58349"/>
    </ligand>
</feature>
<feature type="mutagenesis site" description="2-fold increase in affinity for ASA, 23-fold decrease in affinity for phosphate, and 275-fold decrease in activity." evidence="4">
    <original>R</original>
    <variation>K</variation>
    <location>
        <position position="103"/>
    </location>
</feature>
<feature type="mutagenesis site" description="7-fold increase in affinity for ASA, 150-fold decrease in affinity for phosphate, and 1400-fold decrease in activity." evidence="4">
    <original>R</original>
    <variation>L</variation>
    <location>
        <position position="103"/>
    </location>
</feature>
<feature type="mutagenesis site" description="No change in affinity for ASA and 82-fold decrease in activity." evidence="4">
    <original>E</original>
    <variation>D</variation>
    <location>
        <position position="243"/>
    </location>
</feature>
<feature type="mutagenesis site" description="2-fold increase in affinity for ASA, nearly no change in affinity for phosphate, and 30-fold decrease in activity." evidence="4">
    <original>K</original>
    <variation>R</variation>
    <location>
        <position position="246"/>
    </location>
</feature>
<feature type="mutagenesis site" description="2-fold decrease in affinity for ASA and 825-fold decrease in activity." evidence="4">
    <original>R</original>
    <variation>K</variation>
    <location>
        <position position="270"/>
    </location>
</feature>
<feature type="strand" evidence="6">
    <location>
        <begin position="2"/>
        <end position="8"/>
    </location>
</feature>
<feature type="helix" evidence="6">
    <location>
        <begin position="12"/>
        <end position="24"/>
    </location>
</feature>
<feature type="turn" evidence="6">
    <location>
        <begin position="25"/>
        <end position="29"/>
    </location>
</feature>
<feature type="strand" evidence="6">
    <location>
        <begin position="30"/>
        <end position="38"/>
    </location>
</feature>
<feature type="helix" evidence="6">
    <location>
        <begin position="47"/>
        <end position="49"/>
    </location>
</feature>
<feature type="helix" evidence="6">
    <location>
        <begin position="61"/>
        <end position="64"/>
    </location>
</feature>
<feature type="strand" evidence="6">
    <location>
        <begin position="68"/>
        <end position="72"/>
    </location>
</feature>
<feature type="helix" evidence="6">
    <location>
        <begin position="76"/>
        <end position="88"/>
    </location>
</feature>
<feature type="strand" evidence="6">
    <location>
        <begin position="93"/>
        <end position="100"/>
    </location>
</feature>
<feature type="turn" evidence="6">
    <location>
        <begin position="101"/>
        <end position="104"/>
    </location>
</feature>
<feature type="strand" evidence="6">
    <location>
        <begin position="108"/>
        <end position="111"/>
    </location>
</feature>
<feature type="helix" evidence="6">
    <location>
        <begin position="113"/>
        <end position="126"/>
    </location>
</feature>
<feature type="strand" evidence="6">
    <location>
        <begin position="130"/>
        <end position="133"/>
    </location>
</feature>
<feature type="helix" evidence="6">
    <location>
        <begin position="136"/>
        <end position="150"/>
    </location>
</feature>
<feature type="strand" evidence="6">
    <location>
        <begin position="154"/>
        <end position="163"/>
    </location>
</feature>
<feature type="helix" evidence="6">
    <location>
        <begin position="165"/>
        <end position="167"/>
    </location>
</feature>
<feature type="helix" evidence="6">
    <location>
        <begin position="170"/>
        <end position="185"/>
    </location>
</feature>
<feature type="helix" evidence="6">
    <location>
        <begin position="188"/>
        <end position="191"/>
    </location>
</feature>
<feature type="helix" evidence="6">
    <location>
        <begin position="198"/>
        <end position="209"/>
    </location>
</feature>
<feature type="turn" evidence="6">
    <location>
        <begin position="217"/>
        <end position="219"/>
    </location>
</feature>
<feature type="strand" evidence="6">
    <location>
        <begin position="225"/>
        <end position="228"/>
    </location>
</feature>
<feature type="turn" evidence="6">
    <location>
        <begin position="236"/>
        <end position="238"/>
    </location>
</feature>
<feature type="helix" evidence="6">
    <location>
        <begin position="242"/>
        <end position="255"/>
    </location>
</feature>
<feature type="strand" evidence="7">
    <location>
        <begin position="258"/>
        <end position="260"/>
    </location>
</feature>
<feature type="strand" evidence="6">
    <location>
        <begin position="264"/>
        <end position="267"/>
    </location>
</feature>
<feature type="strand" evidence="6">
    <location>
        <begin position="270"/>
        <end position="287"/>
    </location>
</feature>
<feature type="helix" evidence="6">
    <location>
        <begin position="291"/>
        <end position="300"/>
    </location>
</feature>
<feature type="strand" evidence="6">
    <location>
        <begin position="303"/>
        <end position="307"/>
    </location>
</feature>
<feature type="helix" evidence="6">
    <location>
        <begin position="312"/>
        <end position="318"/>
    </location>
</feature>
<feature type="helix" evidence="6">
    <location>
        <begin position="321"/>
        <end position="324"/>
    </location>
</feature>
<feature type="strand" evidence="6">
    <location>
        <begin position="330"/>
        <end position="338"/>
    </location>
</feature>
<feature type="strand" evidence="6">
    <location>
        <begin position="341"/>
        <end position="352"/>
    </location>
</feature>
<feature type="turn" evidence="6">
    <location>
        <begin position="353"/>
        <end position="358"/>
    </location>
</feature>
<feature type="helix" evidence="6">
    <location>
        <begin position="359"/>
        <end position="370"/>
    </location>
</feature>
<comment type="function">
    <text evidence="2">Catalyzes the NADPH-dependent formation of L-aspartate-semialdehyde (L-ASA) by the reductive dephosphorylation of L-aspartyl-4-phosphate.</text>
</comment>
<comment type="catalytic activity">
    <reaction evidence="2 4">
        <text>L-aspartate 4-semialdehyde + phosphate + NADP(+) = 4-phospho-L-aspartate + NADPH + H(+)</text>
        <dbReference type="Rhea" id="RHEA:24284"/>
        <dbReference type="ChEBI" id="CHEBI:15378"/>
        <dbReference type="ChEBI" id="CHEBI:43474"/>
        <dbReference type="ChEBI" id="CHEBI:57535"/>
        <dbReference type="ChEBI" id="CHEBI:57783"/>
        <dbReference type="ChEBI" id="CHEBI:58349"/>
        <dbReference type="ChEBI" id="CHEBI:537519"/>
        <dbReference type="EC" id="1.2.1.11"/>
    </reaction>
</comment>
<comment type="biophysicochemical properties">
    <kinetics>
        <KM evidence="2">0.24 mM for L-aspartate 4-semialdehyde</KM>
        <KM evidence="2">0.15 mM for NADP(+)</KM>
        <KM evidence="2">1.6 mM for phosphate</KM>
    </kinetics>
</comment>
<comment type="pathway">
    <text evidence="1">Amino-acid biosynthesis; L-lysine biosynthesis via DAP pathway; (S)-tetrahydrodipicolinate from L-aspartate: step 2/4.</text>
</comment>
<comment type="pathway">
    <text evidence="1">Amino-acid biosynthesis; L-methionine biosynthesis via de novo pathway; L-homoserine from L-aspartate: step 2/3.</text>
</comment>
<comment type="pathway">
    <text evidence="1">Amino-acid biosynthesis; L-threonine biosynthesis; L-threonine from L-aspartate: step 2/5.</text>
</comment>
<comment type="subunit">
    <text evidence="3 4">Homodimer.</text>
</comment>
<comment type="domain">
    <text evidence="3">Consists of two domains, an N-terminal nucleotide-binding domain and a C-terminal dimerization domain.</text>
</comment>
<comment type="similarity">
    <text evidence="1">Belongs to the aspartate-semialdehyde dehydrogenase family.</text>
</comment>
<protein>
    <recommendedName>
        <fullName evidence="1">Aspartate-semialdehyde dehydrogenase</fullName>
        <shortName evidence="1">ASA dehydrogenase</shortName>
        <shortName evidence="1">ASADH</shortName>
        <ecNumber evidence="2 4">1.2.1.11</ecNumber>
    </recommendedName>
    <alternativeName>
        <fullName evidence="1">Aspartate-beta-semialdehyde dehydrogenase</fullName>
    </alternativeName>
</protein>
<name>DHAS_HAEIN</name>
<evidence type="ECO:0000255" key="1">
    <source>
        <dbReference type="HAMAP-Rule" id="MF_02121"/>
    </source>
</evidence>
<evidence type="ECO:0000269" key="2">
    <source>
    </source>
</evidence>
<evidence type="ECO:0000269" key="3">
    <source>
    </source>
</evidence>
<evidence type="ECO:0000269" key="4">
    <source>
    </source>
</evidence>
<evidence type="ECO:0000305" key="5">
    <source>
    </source>
</evidence>
<evidence type="ECO:0007829" key="6">
    <source>
        <dbReference type="PDB" id="1PQU"/>
    </source>
</evidence>
<evidence type="ECO:0007829" key="7">
    <source>
        <dbReference type="PDB" id="1Q2X"/>
    </source>
</evidence>